<comment type="function">
    <text evidence="3">RNA binding protein. Can also bind in vitro to single-stranded DNA.</text>
</comment>
<comment type="tissue specificity">
    <text evidence="3">Highly expressed in inflorescences and roots. Detected in leaves and seedlings, but not in stems. Expressed in vegetative shoot apex and root meristem, but not in root cap. Detected in flower buds, junction of pedicels, joints of immature siliques and pistil.</text>
</comment>
<comment type="developmental stage">
    <text evidence="3">Expressed in joints of immature siliques, decreases with maturation and not detected in the joints of mature siliques.</text>
</comment>
<comment type="sequence caution" evidence="4">
    <conflict type="frameshift">
        <sequence resource="EMBL-CDS" id="BAA88269"/>
    </conflict>
</comment>
<protein>
    <recommendedName>
        <fullName>RNA-binding protein 1</fullName>
        <shortName>AtRBP1</shortName>
    </recommendedName>
</protein>
<proteinExistence type="evidence at transcript level"/>
<gene>
    <name type="primary">RBP1</name>
    <name type="synonym">XF41</name>
    <name type="ordered locus">At1g58470</name>
    <name type="ORF">F9K23.11</name>
</gene>
<name>RBP1_ARATH</name>
<evidence type="ECO:0000255" key="1"/>
<evidence type="ECO:0000255" key="2">
    <source>
        <dbReference type="PROSITE-ProRule" id="PRU00176"/>
    </source>
</evidence>
<evidence type="ECO:0000269" key="3">
    <source>
    </source>
</evidence>
<evidence type="ECO:0000305" key="4"/>
<organism>
    <name type="scientific">Arabidopsis thaliana</name>
    <name type="common">Mouse-ear cress</name>
    <dbReference type="NCBI Taxonomy" id="3702"/>
    <lineage>
        <taxon>Eukaryota</taxon>
        <taxon>Viridiplantae</taxon>
        <taxon>Streptophyta</taxon>
        <taxon>Embryophyta</taxon>
        <taxon>Tracheophyta</taxon>
        <taxon>Spermatophyta</taxon>
        <taxon>Magnoliopsida</taxon>
        <taxon>eudicotyledons</taxon>
        <taxon>Gunneridae</taxon>
        <taxon>Pentapetalae</taxon>
        <taxon>rosids</taxon>
        <taxon>malvids</taxon>
        <taxon>Brassicales</taxon>
        <taxon>Brassicaceae</taxon>
        <taxon>Camelineae</taxon>
        <taxon>Arabidopsis</taxon>
    </lineage>
</organism>
<keyword id="KW-0175">Coiled coil</keyword>
<keyword id="KW-1185">Reference proteome</keyword>
<keyword id="KW-0677">Repeat</keyword>
<keyword id="KW-0694">RNA-binding</keyword>
<sequence>MDYDRYKLFVGGIAKETSEEALKQYFSRYGAVLEAVVAKEKVTGKPRGFGFVRFANDCDVVKALRDTHFILGKPVDVRKAIRKHELYQQPFSMQFLERKVQQMNGGLREMSSNGVTSRTKKIFVGGLSSNTTEEEFKSYFERFGRTTDVVVMHDGVTNRPRGFGFVTYDSEDSVEVVMQSNFHELSDKRVEVKRAIPKEGIQSNNGNAVNIPPSYSSFQATPYVPEQNGYGMVLQFPPPVFGYHHNVQAVQYPYGYQFTAQVANVSWNNPIMQPTGFYCAPPHPTPPPTNNLGYIQYMNGFDLSGTNISGYNPLAWPVTGDAAGALIHQFVDLKLDVHSQAHQRMNGGNMGIPLQNGTYI</sequence>
<accession>Q9C652</accession>
<accession>Q9SM01</accession>
<dbReference type="EMBL" id="AB008022">
    <property type="protein sequence ID" value="BAA88269.1"/>
    <property type="status" value="ALT_FRAME"/>
    <property type="molecule type" value="mRNA"/>
</dbReference>
<dbReference type="EMBL" id="AB077822">
    <property type="protein sequence ID" value="BAB83876.1"/>
    <property type="molecule type" value="Genomic_DNA"/>
</dbReference>
<dbReference type="EMBL" id="AC082643">
    <property type="protein sequence ID" value="AAG50640.1"/>
    <property type="molecule type" value="Genomic_DNA"/>
</dbReference>
<dbReference type="EMBL" id="CP002684">
    <property type="protein sequence ID" value="AEE33552.1"/>
    <property type="molecule type" value="Genomic_DNA"/>
</dbReference>
<dbReference type="EMBL" id="CP002684">
    <property type="protein sequence ID" value="ANM57927.1"/>
    <property type="molecule type" value="Genomic_DNA"/>
</dbReference>
<dbReference type="EMBL" id="AY054536">
    <property type="protein sequence ID" value="AAK96727.1"/>
    <property type="molecule type" value="mRNA"/>
</dbReference>
<dbReference type="EMBL" id="AY064643">
    <property type="protein sequence ID" value="AAL47356.1"/>
    <property type="molecule type" value="mRNA"/>
</dbReference>
<dbReference type="PIR" id="F96618">
    <property type="entry name" value="F96618"/>
</dbReference>
<dbReference type="PIR" id="T52461">
    <property type="entry name" value="T52461"/>
</dbReference>
<dbReference type="RefSeq" id="NP_001320402.1">
    <property type="nucleotide sequence ID" value="NM_001333838.1"/>
</dbReference>
<dbReference type="RefSeq" id="NP_176143.1">
    <property type="nucleotide sequence ID" value="NM_104627.2"/>
</dbReference>
<dbReference type="SMR" id="Q9C652"/>
<dbReference type="BioGRID" id="27441">
    <property type="interactions" value="1"/>
</dbReference>
<dbReference type="FunCoup" id="Q9C652">
    <property type="interactions" value="216"/>
</dbReference>
<dbReference type="IntAct" id="Q9C652">
    <property type="interactions" value="1"/>
</dbReference>
<dbReference type="STRING" id="3702.Q9C652"/>
<dbReference type="GlyGen" id="Q9C652">
    <property type="glycosylation" value="1 site"/>
</dbReference>
<dbReference type="PaxDb" id="3702-AT1G58470.1"/>
<dbReference type="ProteomicsDB" id="225948"/>
<dbReference type="EnsemblPlants" id="AT1G58470.1">
    <property type="protein sequence ID" value="AT1G58470.1"/>
    <property type="gene ID" value="AT1G58470"/>
</dbReference>
<dbReference type="EnsemblPlants" id="AT1G58470.2">
    <property type="protein sequence ID" value="AT1G58470.2"/>
    <property type="gene ID" value="AT1G58470"/>
</dbReference>
<dbReference type="GeneID" id="842216"/>
<dbReference type="Gramene" id="AT1G58470.1">
    <property type="protein sequence ID" value="AT1G58470.1"/>
    <property type="gene ID" value="AT1G58470"/>
</dbReference>
<dbReference type="Gramene" id="AT1G58470.2">
    <property type="protein sequence ID" value="AT1G58470.2"/>
    <property type="gene ID" value="AT1G58470"/>
</dbReference>
<dbReference type="KEGG" id="ath:AT1G58470"/>
<dbReference type="Araport" id="AT1G58470"/>
<dbReference type="TAIR" id="AT1G58470">
    <property type="gene designation" value="RBP1"/>
</dbReference>
<dbReference type="eggNOG" id="KOG0118">
    <property type="taxonomic scope" value="Eukaryota"/>
</dbReference>
<dbReference type="HOGENOM" id="CLU_012062_1_2_1"/>
<dbReference type="InParanoid" id="Q9C652"/>
<dbReference type="OMA" id="GPHYLES"/>
<dbReference type="PhylomeDB" id="Q9C652"/>
<dbReference type="PRO" id="PR:Q9C652"/>
<dbReference type="Proteomes" id="UP000006548">
    <property type="component" value="Chromosome 1"/>
</dbReference>
<dbReference type="ExpressionAtlas" id="Q9C652">
    <property type="expression patterns" value="baseline and differential"/>
</dbReference>
<dbReference type="GO" id="GO:0003729">
    <property type="term" value="F:mRNA binding"/>
    <property type="evidence" value="ECO:0000353"/>
    <property type="project" value="TAIR"/>
</dbReference>
<dbReference type="GO" id="GO:0003727">
    <property type="term" value="F:single-stranded RNA binding"/>
    <property type="evidence" value="ECO:0000314"/>
    <property type="project" value="TAIR"/>
</dbReference>
<dbReference type="CDD" id="cd12330">
    <property type="entry name" value="RRM2_Hrp1p"/>
    <property type="match status" value="1"/>
</dbReference>
<dbReference type="FunFam" id="3.30.70.330:FF:001471">
    <property type="match status" value="1"/>
</dbReference>
<dbReference type="Gene3D" id="3.30.70.330">
    <property type="match status" value="2"/>
</dbReference>
<dbReference type="InterPro" id="IPR012677">
    <property type="entry name" value="Nucleotide-bd_a/b_plait_sf"/>
</dbReference>
<dbReference type="InterPro" id="IPR035979">
    <property type="entry name" value="RBD_domain_sf"/>
</dbReference>
<dbReference type="InterPro" id="IPR000504">
    <property type="entry name" value="RRM_dom"/>
</dbReference>
<dbReference type="PANTHER" id="PTHR48032">
    <property type="entry name" value="RNA-BINDING PROTEIN MUSASHI HOMOLOG RBP6"/>
    <property type="match status" value="1"/>
</dbReference>
<dbReference type="PANTHER" id="PTHR48032:SF12">
    <property type="entry name" value="RRM DOMAIN-CONTAINING PROTEIN"/>
    <property type="match status" value="1"/>
</dbReference>
<dbReference type="Pfam" id="PF00076">
    <property type="entry name" value="RRM_1"/>
    <property type="match status" value="2"/>
</dbReference>
<dbReference type="SMART" id="SM00360">
    <property type="entry name" value="RRM"/>
    <property type="match status" value="2"/>
</dbReference>
<dbReference type="SUPFAM" id="SSF54928">
    <property type="entry name" value="RNA-binding domain, RBD"/>
    <property type="match status" value="2"/>
</dbReference>
<dbReference type="PROSITE" id="PS50102">
    <property type="entry name" value="RRM"/>
    <property type="match status" value="2"/>
</dbReference>
<feature type="chain" id="PRO_0000422767" description="RNA-binding protein 1">
    <location>
        <begin position="1"/>
        <end position="360"/>
    </location>
</feature>
<feature type="domain" description="RRM 1" evidence="2">
    <location>
        <begin position="6"/>
        <end position="82"/>
    </location>
</feature>
<feature type="domain" description="RRM 2" evidence="2">
    <location>
        <begin position="120"/>
        <end position="197"/>
    </location>
</feature>
<feature type="coiled-coil region" evidence="1">
    <location>
        <begin position="93"/>
        <end position="113"/>
    </location>
</feature>
<reference key="1">
    <citation type="journal article" date="1999" name="Gene">
        <title>Isolation and analysis of cDNA within a 300 kb Arabidopsis thaliana genomic region located around the 100 map unit of chromosome 1.</title>
        <authorList>
            <person name="Kato A."/>
            <person name="Suzuki M."/>
            <person name="Kuwahara A."/>
            <person name="Ooe H."/>
            <person name="Higano-Inaba K."/>
            <person name="Komeda Y."/>
        </authorList>
    </citation>
    <scope>NUCLEOTIDE SEQUENCE [MRNA]</scope>
    <source>
        <strain>cv. Columbia</strain>
    </source>
</reference>
<reference key="2">
    <citation type="journal article" date="2000" name="Plant Cell Physiol.">
        <title>An RNA-binding protein, AtRBP1, is expressed in actively proliferative regions in Arabidopsis thaliana.</title>
        <authorList>
            <person name="Suzuki M."/>
            <person name="Kato A."/>
            <person name="Komeda Y."/>
        </authorList>
    </citation>
    <scope>NUCLEOTIDE SEQUENCE [MRNA]</scope>
    <scope>FUNCTION</scope>
    <scope>TISSUE SPECIFICITY</scope>
    <scope>DEVELOPMENTAL STAGE</scope>
    <source>
        <strain>cv. Columbia</strain>
    </source>
</reference>
<reference key="3">
    <citation type="journal article" date="2000" name="Nature">
        <title>Sequence and analysis of chromosome 1 of the plant Arabidopsis thaliana.</title>
        <authorList>
            <person name="Theologis A."/>
            <person name="Ecker J.R."/>
            <person name="Palm C.J."/>
            <person name="Federspiel N.A."/>
            <person name="Kaul S."/>
            <person name="White O."/>
            <person name="Alonso J."/>
            <person name="Altafi H."/>
            <person name="Araujo R."/>
            <person name="Bowman C.L."/>
            <person name="Brooks S.Y."/>
            <person name="Buehler E."/>
            <person name="Chan A."/>
            <person name="Chao Q."/>
            <person name="Chen H."/>
            <person name="Cheuk R.F."/>
            <person name="Chin C.W."/>
            <person name="Chung M.K."/>
            <person name="Conn L."/>
            <person name="Conway A.B."/>
            <person name="Conway A.R."/>
            <person name="Creasy T.H."/>
            <person name="Dewar K."/>
            <person name="Dunn P."/>
            <person name="Etgu P."/>
            <person name="Feldblyum T.V."/>
            <person name="Feng J.-D."/>
            <person name="Fong B."/>
            <person name="Fujii C.Y."/>
            <person name="Gill J.E."/>
            <person name="Goldsmith A.D."/>
            <person name="Haas B."/>
            <person name="Hansen N.F."/>
            <person name="Hughes B."/>
            <person name="Huizar L."/>
            <person name="Hunter J.L."/>
            <person name="Jenkins J."/>
            <person name="Johnson-Hopson C."/>
            <person name="Khan S."/>
            <person name="Khaykin E."/>
            <person name="Kim C.J."/>
            <person name="Koo H.L."/>
            <person name="Kremenetskaia I."/>
            <person name="Kurtz D.B."/>
            <person name="Kwan A."/>
            <person name="Lam B."/>
            <person name="Langin-Hooper S."/>
            <person name="Lee A."/>
            <person name="Lee J.M."/>
            <person name="Lenz C.A."/>
            <person name="Li J.H."/>
            <person name="Li Y.-P."/>
            <person name="Lin X."/>
            <person name="Liu S.X."/>
            <person name="Liu Z.A."/>
            <person name="Luros J.S."/>
            <person name="Maiti R."/>
            <person name="Marziali A."/>
            <person name="Militscher J."/>
            <person name="Miranda M."/>
            <person name="Nguyen M."/>
            <person name="Nierman W.C."/>
            <person name="Osborne B.I."/>
            <person name="Pai G."/>
            <person name="Peterson J."/>
            <person name="Pham P.K."/>
            <person name="Rizzo M."/>
            <person name="Rooney T."/>
            <person name="Rowley D."/>
            <person name="Sakano H."/>
            <person name="Salzberg S.L."/>
            <person name="Schwartz J.R."/>
            <person name="Shinn P."/>
            <person name="Southwick A.M."/>
            <person name="Sun H."/>
            <person name="Tallon L.J."/>
            <person name="Tambunga G."/>
            <person name="Toriumi M.J."/>
            <person name="Town C.D."/>
            <person name="Utterback T."/>
            <person name="Van Aken S."/>
            <person name="Vaysberg M."/>
            <person name="Vysotskaia V.S."/>
            <person name="Walker M."/>
            <person name="Wu D."/>
            <person name="Yu G."/>
            <person name="Fraser C.M."/>
            <person name="Venter J.C."/>
            <person name="Davis R.W."/>
        </authorList>
    </citation>
    <scope>NUCLEOTIDE SEQUENCE [LARGE SCALE GENOMIC DNA]</scope>
    <source>
        <strain>cv. Columbia</strain>
    </source>
</reference>
<reference key="4">
    <citation type="journal article" date="2017" name="Plant J.">
        <title>Araport11: a complete reannotation of the Arabidopsis thaliana reference genome.</title>
        <authorList>
            <person name="Cheng C.Y."/>
            <person name="Krishnakumar V."/>
            <person name="Chan A.P."/>
            <person name="Thibaud-Nissen F."/>
            <person name="Schobel S."/>
            <person name="Town C.D."/>
        </authorList>
    </citation>
    <scope>GENOME REANNOTATION</scope>
    <source>
        <strain>cv. Columbia</strain>
    </source>
</reference>
<reference key="5">
    <citation type="journal article" date="2003" name="Science">
        <title>Empirical analysis of transcriptional activity in the Arabidopsis genome.</title>
        <authorList>
            <person name="Yamada K."/>
            <person name="Lim J."/>
            <person name="Dale J.M."/>
            <person name="Chen H."/>
            <person name="Shinn P."/>
            <person name="Palm C.J."/>
            <person name="Southwick A.M."/>
            <person name="Wu H.C."/>
            <person name="Kim C.J."/>
            <person name="Nguyen M."/>
            <person name="Pham P.K."/>
            <person name="Cheuk R.F."/>
            <person name="Karlin-Newmann G."/>
            <person name="Liu S.X."/>
            <person name="Lam B."/>
            <person name="Sakano H."/>
            <person name="Wu T."/>
            <person name="Yu G."/>
            <person name="Miranda M."/>
            <person name="Quach H.L."/>
            <person name="Tripp M."/>
            <person name="Chang C.H."/>
            <person name="Lee J.M."/>
            <person name="Toriumi M.J."/>
            <person name="Chan M.M."/>
            <person name="Tang C.C."/>
            <person name="Onodera C.S."/>
            <person name="Deng J.M."/>
            <person name="Akiyama K."/>
            <person name="Ansari Y."/>
            <person name="Arakawa T."/>
            <person name="Banh J."/>
            <person name="Banno F."/>
            <person name="Bowser L."/>
            <person name="Brooks S.Y."/>
            <person name="Carninci P."/>
            <person name="Chao Q."/>
            <person name="Choy N."/>
            <person name="Enju A."/>
            <person name="Goldsmith A.D."/>
            <person name="Gurjal M."/>
            <person name="Hansen N.F."/>
            <person name="Hayashizaki Y."/>
            <person name="Johnson-Hopson C."/>
            <person name="Hsuan V.W."/>
            <person name="Iida K."/>
            <person name="Karnes M."/>
            <person name="Khan S."/>
            <person name="Koesema E."/>
            <person name="Ishida J."/>
            <person name="Jiang P.X."/>
            <person name="Jones T."/>
            <person name="Kawai J."/>
            <person name="Kamiya A."/>
            <person name="Meyers C."/>
            <person name="Nakajima M."/>
            <person name="Narusaka M."/>
            <person name="Seki M."/>
            <person name="Sakurai T."/>
            <person name="Satou M."/>
            <person name="Tamse R."/>
            <person name="Vaysberg M."/>
            <person name="Wallender E.K."/>
            <person name="Wong C."/>
            <person name="Yamamura Y."/>
            <person name="Yuan S."/>
            <person name="Shinozaki K."/>
            <person name="Davis R.W."/>
            <person name="Theologis A."/>
            <person name="Ecker J.R."/>
        </authorList>
    </citation>
    <scope>NUCLEOTIDE SEQUENCE [LARGE SCALE MRNA]</scope>
    <source>
        <strain>cv. Columbia</strain>
    </source>
</reference>